<name>CAI15_CONGE</name>
<evidence type="ECO:0000250" key="1">
    <source>
        <dbReference type="UniProtKB" id="Q86RB2"/>
    </source>
</evidence>
<evidence type="ECO:0000255" key="2"/>
<evidence type="ECO:0000269" key="3">
    <source>
    </source>
</evidence>
<evidence type="ECO:0000303" key="4">
    <source>
    </source>
</evidence>
<evidence type="ECO:0000305" key="5"/>
<evidence type="ECO:0000305" key="6">
    <source>
    </source>
</evidence>
<evidence type="ECO:0000312" key="7">
    <source>
        <dbReference type="EMBL" id="BAO65592.1"/>
    </source>
</evidence>
<feature type="signal peptide" evidence="2">
    <location>
        <begin position="1"/>
        <end position="21"/>
    </location>
</feature>
<feature type="propeptide" id="PRO_0000454095" evidence="6">
    <location>
        <begin position="22"/>
        <end position="47"/>
    </location>
</feature>
<feature type="peptide" id="PRO_5004957488" description="Alpha-conotoxin G1.5" evidence="6">
    <location>
        <begin position="48"/>
        <end position="65"/>
    </location>
</feature>
<feature type="modified residue" description="Glutamine amide" evidence="6">
    <location>
        <position position="65"/>
    </location>
</feature>
<feature type="disulfide bond" evidence="1">
    <location>
        <begin position="49"/>
        <end position="55"/>
    </location>
</feature>
<feature type="disulfide bond" evidence="1">
    <location>
        <begin position="50"/>
        <end position="63"/>
    </location>
</feature>
<protein>
    <recommendedName>
        <fullName evidence="4">Alpha-conotoxin G1.5</fullName>
    </recommendedName>
</protein>
<proteinExistence type="evidence at protein level"/>
<reference evidence="7" key="1">
    <citation type="journal article" date="2014" name="Nat. Commun.">
        <title>Evolution of separate predation- and defence-evoked venoms in carnivorous cone snails.</title>
        <authorList>
            <person name="Dutertre S."/>
            <person name="Jin A.-H."/>
            <person name="Vetter I."/>
            <person name="Hamilton B."/>
            <person name="Sunagar K."/>
            <person name="Lavergne V."/>
            <person name="Dutertre V."/>
            <person name="Fry B.G."/>
            <person name="Antunes A."/>
            <person name="Venter D.J."/>
            <person name="Alewood P.F."/>
            <person name="Lewis R.J."/>
        </authorList>
    </citation>
    <scope>NUCLEOTIDE SEQUENCE [MRNA]</scope>
    <source>
        <tissue>Venom duct</tissue>
    </source>
</reference>
<reference key="2">
    <citation type="journal article" date="2021" name="Biochem. Pharmacol.">
        <title>Globular and ribbon isomers of Conus geographus alpha-conotoxins antagonize human nicotinic acetylcholine receptors.</title>
        <authorList>
            <person name="Tae H.S."/>
            <person name="Gao B."/>
            <person name="Jin A.H."/>
            <person name="Alewood P.F."/>
            <person name="Adams D.J."/>
        </authorList>
    </citation>
    <scope>SYNTHESIS OF 48-65 AS GLOBULAR AND RIBBON ISOMER</scope>
    <scope>FUNCTION</scope>
    <scope>PROBABLE AMIDATION AT GLN-65</scope>
</reference>
<dbReference type="EMBL" id="AB910824">
    <property type="protein sequence ID" value="BAO65592.1"/>
    <property type="molecule type" value="mRNA"/>
</dbReference>
<dbReference type="GO" id="GO:0005576">
    <property type="term" value="C:extracellular region"/>
    <property type="evidence" value="ECO:0007669"/>
    <property type="project" value="UniProtKB-SubCell"/>
</dbReference>
<dbReference type="GO" id="GO:0035792">
    <property type="term" value="C:host cell postsynaptic membrane"/>
    <property type="evidence" value="ECO:0007669"/>
    <property type="project" value="UniProtKB-KW"/>
</dbReference>
<dbReference type="GO" id="GO:0030550">
    <property type="term" value="F:acetylcholine receptor inhibitor activity"/>
    <property type="evidence" value="ECO:0007669"/>
    <property type="project" value="UniProtKB-KW"/>
</dbReference>
<dbReference type="GO" id="GO:0090729">
    <property type="term" value="F:toxin activity"/>
    <property type="evidence" value="ECO:0007669"/>
    <property type="project" value="UniProtKB-KW"/>
</dbReference>
<dbReference type="InterPro" id="IPR009958">
    <property type="entry name" value="Conotoxin_a-typ"/>
</dbReference>
<dbReference type="Pfam" id="PF07365">
    <property type="entry name" value="Toxin_8"/>
    <property type="match status" value="1"/>
</dbReference>
<comment type="function">
    <text evidence="3">Alpha-conotoxins act on postsynaptic membranes, they bind to the nicotinic acetylcholine receptors (nAChR) and thus inhibit them. Globular isomer (C1-C3; C2-C4) selectively inhibits neuronal (non-muscle) nAChR subtypes particularly human alpha-3-beta-2/CHRNA3-CHRNB2 (IC(50)=35.7 nM) and alpha-9-alpha-10/CHRNA9-CHRNA10 nAChRs (IC(50)=569 nM), while the ribbon isomer (C1-C4; C2-C3) shows weak inhibition on alpha-3-beta-2/CHRNA3-CHRNB2, but not on all other receptors tested.</text>
</comment>
<comment type="subcellular location">
    <subcellularLocation>
        <location evidence="6">Secreted</location>
    </subcellularLocation>
</comment>
<comment type="tissue specificity">
    <text evidence="6">Expressed by the venom duct.</text>
</comment>
<comment type="domain">
    <text evidence="5">The cysteine framework is I (CC-C-C). Alpha4/7 pattern.</text>
</comment>
<comment type="miscellaneous">
    <text evidence="3">Both the globular (with C1-C3; C2-C4 disulfide pattern) and ribbon (C1-C4; C2-C3) isomers shows no or very weak inhibitory activity on muscle-type alpha-1-beta-1-delta-epsilon/CHRNA1-CHRNB1-CHRND-CHRNE nAChRs, alpha-4-beta-2/CHRNA4-CHRNB2, alpha-3-beta-4/CHRNA3-CHRNB4 (IC(50)=1928 nM by globular isomer), and alpha-7/CHRNA7 (IC(50)=1935 nM by globular isomer).</text>
</comment>
<comment type="similarity">
    <text evidence="5">Belongs to the conotoxin A superfamily.</text>
</comment>
<accession>X5I9Z2</accession>
<sequence>MGMRMMFTVFLLVALATTVVSFTSDRASDRRNAAVKAFDLISSTVKKGCCSHPACSGNNPEYCRQGR</sequence>
<organism>
    <name type="scientific">Conus geographus</name>
    <name type="common">Geography cone</name>
    <name type="synonym">Nubecula geographus</name>
    <dbReference type="NCBI Taxonomy" id="6491"/>
    <lineage>
        <taxon>Eukaryota</taxon>
        <taxon>Metazoa</taxon>
        <taxon>Spiralia</taxon>
        <taxon>Lophotrochozoa</taxon>
        <taxon>Mollusca</taxon>
        <taxon>Gastropoda</taxon>
        <taxon>Caenogastropoda</taxon>
        <taxon>Neogastropoda</taxon>
        <taxon>Conoidea</taxon>
        <taxon>Conidae</taxon>
        <taxon>Conus</taxon>
        <taxon>Gastridium</taxon>
    </lineage>
</organism>
<keyword id="KW-0008">Acetylcholine receptor inhibiting toxin</keyword>
<keyword id="KW-0027">Amidation</keyword>
<keyword id="KW-0165">Cleavage on pair of basic residues</keyword>
<keyword id="KW-1015">Disulfide bond</keyword>
<keyword id="KW-0528">Neurotoxin</keyword>
<keyword id="KW-0629">Postsynaptic neurotoxin</keyword>
<keyword id="KW-0964">Secreted</keyword>
<keyword id="KW-0732">Signal</keyword>
<keyword id="KW-0800">Toxin</keyword>